<organism>
    <name type="scientific">Homo sapiens</name>
    <name type="common">Human</name>
    <dbReference type="NCBI Taxonomy" id="9606"/>
    <lineage>
        <taxon>Eukaryota</taxon>
        <taxon>Metazoa</taxon>
        <taxon>Chordata</taxon>
        <taxon>Craniata</taxon>
        <taxon>Vertebrata</taxon>
        <taxon>Euteleostomi</taxon>
        <taxon>Mammalia</taxon>
        <taxon>Eutheria</taxon>
        <taxon>Euarchontoglires</taxon>
        <taxon>Primates</taxon>
        <taxon>Haplorrhini</taxon>
        <taxon>Catarrhini</taxon>
        <taxon>Hominidae</taxon>
        <taxon>Homo</taxon>
    </lineage>
</organism>
<name>OR1M1_HUMAN</name>
<reference key="1">
    <citation type="submission" date="2001-07" db="EMBL/GenBank/DDBJ databases">
        <title>Genome-wide discovery and analysis of human seven transmembrane helix receptor genes.</title>
        <authorList>
            <person name="Suwa M."/>
            <person name="Sato T."/>
            <person name="Okouchi I."/>
            <person name="Arita M."/>
            <person name="Futami K."/>
            <person name="Matsumoto S."/>
            <person name="Tsutsumi S."/>
            <person name="Aburatani H."/>
            <person name="Asai K."/>
            <person name="Akiyama Y."/>
        </authorList>
    </citation>
    <scope>NUCLEOTIDE SEQUENCE [GENOMIC DNA]</scope>
</reference>
<reference key="2">
    <citation type="journal article" date="2004" name="Genome Res.">
        <title>The status, quality, and expansion of the NIH full-length cDNA project: the Mammalian Gene Collection (MGC).</title>
        <authorList>
            <consortium name="The MGC Project Team"/>
        </authorList>
    </citation>
    <scope>NUCLEOTIDE SEQUENCE [LARGE SCALE MRNA]</scope>
</reference>
<reference key="3">
    <citation type="journal article" date="2002" name="Genomics">
        <title>DEFOG: a practical scheme for deciphering families of genes.</title>
        <authorList>
            <person name="Fuchs T."/>
            <person name="Malecova B."/>
            <person name="Linhart C."/>
            <person name="Sharan R."/>
            <person name="Khen M."/>
            <person name="Herwig R."/>
            <person name="Shmulevich D."/>
            <person name="Elkon R."/>
            <person name="Steinfath M."/>
            <person name="O'Brien J.K."/>
            <person name="Radelof U."/>
            <person name="Lehrach H."/>
            <person name="Lancet D."/>
            <person name="Shamir R."/>
        </authorList>
    </citation>
    <scope>NUCLEOTIDE SEQUENCE [GENOMIC DNA] OF 68-283</scope>
</reference>
<reference key="4">
    <citation type="journal article" date="2004" name="Proc. Natl. Acad. Sci. U.S.A.">
        <title>The human olfactory receptor gene family.</title>
        <authorList>
            <person name="Malnic B."/>
            <person name="Godfrey P.A."/>
            <person name="Buck L.B."/>
        </authorList>
    </citation>
    <scope>IDENTIFICATION</scope>
</reference>
<reference key="5">
    <citation type="journal article" date="2004" name="Proc. Natl. Acad. Sci. U.S.A.">
        <authorList>
            <person name="Malnic B."/>
            <person name="Godfrey P.A."/>
            <person name="Buck L.B."/>
        </authorList>
    </citation>
    <scope>ERRATUM OF PUBMED:14983052</scope>
</reference>
<protein>
    <recommendedName>
        <fullName evidence="3">Olfactory receptor 1M1</fullName>
    </recommendedName>
    <alternativeName>
        <fullName evidence="4">Olfactory receptor 19-6</fullName>
        <shortName>OR19-6</shortName>
    </alternativeName>
    <alternativeName>
        <fullName>Olfactory receptor OR19-5</fullName>
    </alternativeName>
</protein>
<keyword id="KW-1003">Cell membrane</keyword>
<keyword id="KW-1015">Disulfide bond</keyword>
<keyword id="KW-0297">G-protein coupled receptor</keyword>
<keyword id="KW-0325">Glycoprotein</keyword>
<keyword id="KW-0472">Membrane</keyword>
<keyword id="KW-0552">Olfaction</keyword>
<keyword id="KW-0675">Receptor</keyword>
<keyword id="KW-1185">Reference proteome</keyword>
<keyword id="KW-0716">Sensory transduction</keyword>
<keyword id="KW-0807">Transducer</keyword>
<keyword id="KW-0812">Transmembrane</keyword>
<keyword id="KW-1133">Transmembrane helix</keyword>
<feature type="chain" id="PRO_0000150447" description="Olfactory receptor 1M1">
    <location>
        <begin position="1"/>
        <end position="313"/>
    </location>
</feature>
<feature type="topological domain" description="Extracellular" evidence="1">
    <location>
        <begin position="1"/>
        <end position="25"/>
    </location>
</feature>
<feature type="transmembrane region" description="Helical; Name=1" evidence="1">
    <location>
        <begin position="26"/>
        <end position="49"/>
    </location>
</feature>
<feature type="topological domain" description="Cytoplasmic" evidence="1">
    <location>
        <begin position="50"/>
        <end position="57"/>
    </location>
</feature>
<feature type="transmembrane region" description="Helical; Name=2" evidence="1">
    <location>
        <begin position="58"/>
        <end position="79"/>
    </location>
</feature>
<feature type="topological domain" description="Extracellular" evidence="1">
    <location>
        <begin position="80"/>
        <end position="100"/>
    </location>
</feature>
<feature type="transmembrane region" description="Helical; Name=3" evidence="1">
    <location>
        <begin position="101"/>
        <end position="120"/>
    </location>
</feature>
<feature type="topological domain" description="Cytoplasmic" evidence="1">
    <location>
        <begin position="121"/>
        <end position="139"/>
    </location>
</feature>
<feature type="transmembrane region" description="Helical; Name=4" evidence="1">
    <location>
        <begin position="140"/>
        <end position="158"/>
    </location>
</feature>
<feature type="topological domain" description="Extracellular" evidence="1">
    <location>
        <begin position="159"/>
        <end position="196"/>
    </location>
</feature>
<feature type="transmembrane region" description="Helical; Name=5" evidence="1">
    <location>
        <begin position="197"/>
        <end position="219"/>
    </location>
</feature>
<feature type="topological domain" description="Cytoplasmic" evidence="1">
    <location>
        <begin position="220"/>
        <end position="236"/>
    </location>
</feature>
<feature type="transmembrane region" description="Helical; Name=6" evidence="1">
    <location>
        <begin position="237"/>
        <end position="259"/>
    </location>
</feature>
<feature type="topological domain" description="Extracellular" evidence="1">
    <location>
        <begin position="260"/>
        <end position="272"/>
    </location>
</feature>
<feature type="transmembrane region" description="Helical; Name=7" evidence="1">
    <location>
        <begin position="273"/>
        <end position="292"/>
    </location>
</feature>
<feature type="topological domain" description="Cytoplasmic" evidence="1">
    <location>
        <begin position="293"/>
        <end position="313"/>
    </location>
</feature>
<feature type="glycosylation site" description="N-linked (GlcNAc...) asparagine" evidence="1">
    <location>
        <position position="5"/>
    </location>
</feature>
<feature type="disulfide bond" evidence="2">
    <location>
        <begin position="97"/>
        <end position="189"/>
    </location>
</feature>
<evidence type="ECO:0000255" key="1"/>
<evidence type="ECO:0000255" key="2">
    <source>
        <dbReference type="PROSITE-ProRule" id="PRU00521"/>
    </source>
</evidence>
<evidence type="ECO:0000305" key="3"/>
<evidence type="ECO:0000312" key="4">
    <source>
        <dbReference type="HGNC" id="HGNC:8220"/>
    </source>
</evidence>
<gene>
    <name evidence="4" type="primary">OR1M1</name>
</gene>
<comment type="function">
    <text evidence="3">Odorant receptor.</text>
</comment>
<comment type="subcellular location">
    <subcellularLocation>
        <location evidence="3">Cell membrane</location>
        <topology evidence="1">Multi-pass membrane protein</topology>
    </subcellularLocation>
</comment>
<comment type="similarity">
    <text evidence="2">Belongs to the G-protein coupled receptor 1 family.</text>
</comment>
<comment type="online information" name="Human Olfactory Receptor Data Exploratorium (HORDE)">
    <link uri="http://genome.weizmann.ac.il/horde/card/index/symbol:OR1M1"/>
</comment>
<proteinExistence type="evidence at transcript level"/>
<sequence length="313" mass="34840">MEPRNQTSASQFILLGLSEKPEQETLLFSLFFCMYLVMVVGNLLIILAISIDSHLHTPMYFFLANLSLVDFCLATNTIPKMLVSLQTGSKAISYPCCLIQMYFFHFFGIVDSVIIAMMAYDRFVAICHPLHYAKIMSLRLCRLLVGALWAFSCFISLTHILLMARLVFCGSHEVPHYFCDLTPILRLSCTDTSVNRIFILIVAGMVIATPFVCILASYARILVAIMKVPSAGGRKKAFSTCSSHLSVVALFYGTTIGVYLCPSSVLTTVKEKASAVMYTAVTPMLNPFIYSLRNRDLKGALRKLVNRKITSSS</sequence>
<dbReference type="EMBL" id="AB065925">
    <property type="protein sequence ID" value="BAC06140.1"/>
    <property type="molecule type" value="Genomic_DNA"/>
</dbReference>
<dbReference type="EMBL" id="BC137551">
    <property type="protein sequence ID" value="AAI37552.1"/>
    <property type="molecule type" value="mRNA"/>
</dbReference>
<dbReference type="EMBL" id="BC137555">
    <property type="protein sequence ID" value="AAI37556.1"/>
    <property type="molecule type" value="mRNA"/>
</dbReference>
<dbReference type="EMBL" id="AF399549">
    <property type="protein sequence ID" value="AAK95034.1"/>
    <property type="molecule type" value="Genomic_DNA"/>
</dbReference>
<dbReference type="EMBL" id="BK004269">
    <property type="protein sequence ID" value="DAA04667.1"/>
    <property type="molecule type" value="Genomic_DNA"/>
</dbReference>
<dbReference type="CCDS" id="CCDS32896.1"/>
<dbReference type="RefSeq" id="NP_001004456.1">
    <property type="nucleotide sequence ID" value="NM_001004456.2"/>
</dbReference>
<dbReference type="SMR" id="Q8NGA1"/>
<dbReference type="BioGRID" id="125939">
    <property type="interactions" value="39"/>
</dbReference>
<dbReference type="FunCoup" id="Q8NGA1">
    <property type="interactions" value="473"/>
</dbReference>
<dbReference type="IntAct" id="Q8NGA1">
    <property type="interactions" value="24"/>
</dbReference>
<dbReference type="STRING" id="9606.ENSP00000493107"/>
<dbReference type="GlyCosmos" id="Q8NGA1">
    <property type="glycosylation" value="1 site, No reported glycans"/>
</dbReference>
<dbReference type="GlyGen" id="Q8NGA1">
    <property type="glycosylation" value="3 sites, 1 O-linked glycan (1 site)"/>
</dbReference>
<dbReference type="iPTMnet" id="Q8NGA1"/>
<dbReference type="PhosphoSitePlus" id="Q8NGA1"/>
<dbReference type="BioMuta" id="OR1M1"/>
<dbReference type="DMDM" id="38372651"/>
<dbReference type="jPOST" id="Q8NGA1"/>
<dbReference type="MassIVE" id="Q8NGA1"/>
<dbReference type="PaxDb" id="9606-ENSP00000401966"/>
<dbReference type="PeptideAtlas" id="Q8NGA1"/>
<dbReference type="ProteomicsDB" id="73459"/>
<dbReference type="Antibodypedia" id="24990">
    <property type="antibodies" value="69 antibodies from 17 providers"/>
</dbReference>
<dbReference type="DNASU" id="125963"/>
<dbReference type="Ensembl" id="ENST00000429566.3">
    <property type="protein sequence ID" value="ENSP00000401966.2"/>
    <property type="gene ID" value="ENSG00000170929.6"/>
</dbReference>
<dbReference type="Ensembl" id="ENST00000641627.1">
    <property type="protein sequence ID" value="ENSP00000493107.1"/>
    <property type="gene ID" value="ENSG00000170929.6"/>
</dbReference>
<dbReference type="GeneID" id="125963"/>
<dbReference type="KEGG" id="hsa:125963"/>
<dbReference type="MANE-Select" id="ENST00000641627.1">
    <property type="protein sequence ID" value="ENSP00000493107.1"/>
    <property type="RefSeq nucleotide sequence ID" value="NM_001004456.2"/>
    <property type="RefSeq protein sequence ID" value="NP_001004456.1"/>
</dbReference>
<dbReference type="UCSC" id="uc010xkj.3">
    <property type="organism name" value="human"/>
</dbReference>
<dbReference type="AGR" id="HGNC:8220"/>
<dbReference type="CTD" id="125963"/>
<dbReference type="GeneCards" id="OR1M1"/>
<dbReference type="HGNC" id="HGNC:8220">
    <property type="gene designation" value="OR1M1"/>
</dbReference>
<dbReference type="HPA" id="ENSG00000170929">
    <property type="expression patterns" value="Not detected"/>
</dbReference>
<dbReference type="neXtProt" id="NX_Q8NGA1"/>
<dbReference type="OpenTargets" id="ENSG00000170929"/>
<dbReference type="PharmGKB" id="PA32089"/>
<dbReference type="VEuPathDB" id="HostDB:ENSG00000170929"/>
<dbReference type="eggNOG" id="ENOG502T9JZ">
    <property type="taxonomic scope" value="Eukaryota"/>
</dbReference>
<dbReference type="GeneTree" id="ENSGT00940000163044"/>
<dbReference type="HOGENOM" id="CLU_012526_1_0_1"/>
<dbReference type="InParanoid" id="Q8NGA1"/>
<dbReference type="OMA" id="IIMAIMK"/>
<dbReference type="OrthoDB" id="9975554at2759"/>
<dbReference type="PAN-GO" id="Q8NGA1">
    <property type="GO annotations" value="3 GO annotations based on evolutionary models"/>
</dbReference>
<dbReference type="PhylomeDB" id="Q8NGA1"/>
<dbReference type="TreeFam" id="TF337210"/>
<dbReference type="PathwayCommons" id="Q8NGA1"/>
<dbReference type="Reactome" id="R-HSA-9752946">
    <property type="pathway name" value="Expression and translocation of olfactory receptors"/>
</dbReference>
<dbReference type="BioGRID-ORCS" id="125963">
    <property type="hits" value="8 hits in 740 CRISPR screens"/>
</dbReference>
<dbReference type="ChiTaRS" id="OR1M1">
    <property type="organism name" value="human"/>
</dbReference>
<dbReference type="GeneWiki" id="OR1M1"/>
<dbReference type="GenomeRNAi" id="125963"/>
<dbReference type="Pharos" id="Q8NGA1">
    <property type="development level" value="Tdark"/>
</dbReference>
<dbReference type="PRO" id="PR:Q8NGA1"/>
<dbReference type="Proteomes" id="UP000005640">
    <property type="component" value="Chromosome 19"/>
</dbReference>
<dbReference type="RNAct" id="Q8NGA1">
    <property type="molecule type" value="protein"/>
</dbReference>
<dbReference type="Bgee" id="ENSG00000170929">
    <property type="expression patterns" value="Expressed in olfactory segment of nasal mucosa and 2 other cell types or tissues"/>
</dbReference>
<dbReference type="GO" id="GO:0005886">
    <property type="term" value="C:plasma membrane"/>
    <property type="evidence" value="ECO:0000318"/>
    <property type="project" value="GO_Central"/>
</dbReference>
<dbReference type="GO" id="GO:0004930">
    <property type="term" value="F:G protein-coupled receptor activity"/>
    <property type="evidence" value="ECO:0007669"/>
    <property type="project" value="UniProtKB-KW"/>
</dbReference>
<dbReference type="GO" id="GO:0004984">
    <property type="term" value="F:olfactory receptor activity"/>
    <property type="evidence" value="ECO:0000318"/>
    <property type="project" value="GO_Central"/>
</dbReference>
<dbReference type="GO" id="GO:0007165">
    <property type="term" value="P:signal transduction"/>
    <property type="evidence" value="ECO:0000318"/>
    <property type="project" value="GO_Central"/>
</dbReference>
<dbReference type="CDD" id="cd15918">
    <property type="entry name" value="7tmA_OR1_7-like"/>
    <property type="match status" value="1"/>
</dbReference>
<dbReference type="FunFam" id="1.10.1220.70:FF:000001">
    <property type="entry name" value="Olfactory receptor"/>
    <property type="match status" value="1"/>
</dbReference>
<dbReference type="FunFam" id="1.20.1070.10:FF:000009">
    <property type="entry name" value="Olfactory receptor"/>
    <property type="match status" value="1"/>
</dbReference>
<dbReference type="Gene3D" id="1.20.1070.10">
    <property type="entry name" value="Rhodopsin 7-helix transmembrane proteins"/>
    <property type="match status" value="1"/>
</dbReference>
<dbReference type="InterPro" id="IPR000276">
    <property type="entry name" value="GPCR_Rhodpsn"/>
</dbReference>
<dbReference type="InterPro" id="IPR017452">
    <property type="entry name" value="GPCR_Rhodpsn_7TM"/>
</dbReference>
<dbReference type="InterPro" id="IPR000725">
    <property type="entry name" value="Olfact_rcpt"/>
</dbReference>
<dbReference type="PANTHER" id="PTHR48001">
    <property type="entry name" value="OLFACTORY RECEPTOR"/>
    <property type="match status" value="1"/>
</dbReference>
<dbReference type="Pfam" id="PF13853">
    <property type="entry name" value="7tm_4"/>
    <property type="match status" value="1"/>
</dbReference>
<dbReference type="PRINTS" id="PR00237">
    <property type="entry name" value="GPCRRHODOPSN"/>
</dbReference>
<dbReference type="PRINTS" id="PR00245">
    <property type="entry name" value="OLFACTORYR"/>
</dbReference>
<dbReference type="SUPFAM" id="SSF81321">
    <property type="entry name" value="Family A G protein-coupled receptor-like"/>
    <property type="match status" value="1"/>
</dbReference>
<dbReference type="PROSITE" id="PS00237">
    <property type="entry name" value="G_PROTEIN_RECEP_F1_1"/>
    <property type="match status" value="1"/>
</dbReference>
<dbReference type="PROSITE" id="PS50262">
    <property type="entry name" value="G_PROTEIN_RECEP_F1_2"/>
    <property type="match status" value="1"/>
</dbReference>
<accession>Q8NGA1</accession>
<accession>B9EHA6</accession>
<accession>Q6IFJ3</accession>
<accession>Q96R91</accession>